<gene>
    <name evidence="1" type="primary">rplI</name>
    <name type="ordered locus">MAG2370</name>
</gene>
<name>RL9_MYCAP</name>
<accession>A5IY26</accession>
<dbReference type="EMBL" id="CU179680">
    <property type="protein sequence ID" value="CAL58935.1"/>
    <property type="molecule type" value="Genomic_DNA"/>
</dbReference>
<dbReference type="RefSeq" id="WP_004024398.1">
    <property type="nucleotide sequence ID" value="NC_009497.1"/>
</dbReference>
<dbReference type="SMR" id="A5IY26"/>
<dbReference type="STRING" id="347257.MAG2370"/>
<dbReference type="GeneID" id="93358004"/>
<dbReference type="KEGG" id="maa:MAG2370"/>
<dbReference type="HOGENOM" id="CLU_078938_3_1_14"/>
<dbReference type="Proteomes" id="UP000007065">
    <property type="component" value="Chromosome"/>
</dbReference>
<dbReference type="GO" id="GO:1990904">
    <property type="term" value="C:ribonucleoprotein complex"/>
    <property type="evidence" value="ECO:0007669"/>
    <property type="project" value="UniProtKB-KW"/>
</dbReference>
<dbReference type="GO" id="GO:0005840">
    <property type="term" value="C:ribosome"/>
    <property type="evidence" value="ECO:0007669"/>
    <property type="project" value="UniProtKB-KW"/>
</dbReference>
<dbReference type="GO" id="GO:0019843">
    <property type="term" value="F:rRNA binding"/>
    <property type="evidence" value="ECO:0007669"/>
    <property type="project" value="UniProtKB-UniRule"/>
</dbReference>
<dbReference type="GO" id="GO:0003735">
    <property type="term" value="F:structural constituent of ribosome"/>
    <property type="evidence" value="ECO:0007669"/>
    <property type="project" value="InterPro"/>
</dbReference>
<dbReference type="GO" id="GO:0006412">
    <property type="term" value="P:translation"/>
    <property type="evidence" value="ECO:0007669"/>
    <property type="project" value="UniProtKB-UniRule"/>
</dbReference>
<dbReference type="Gene3D" id="3.10.430.100">
    <property type="entry name" value="Ribosomal protein L9, C-terminal domain"/>
    <property type="match status" value="1"/>
</dbReference>
<dbReference type="Gene3D" id="3.40.5.10">
    <property type="entry name" value="Ribosomal protein L9, N-terminal domain"/>
    <property type="match status" value="1"/>
</dbReference>
<dbReference type="HAMAP" id="MF_00503">
    <property type="entry name" value="Ribosomal_bL9"/>
    <property type="match status" value="1"/>
</dbReference>
<dbReference type="InterPro" id="IPR000244">
    <property type="entry name" value="Ribosomal_bL9"/>
</dbReference>
<dbReference type="InterPro" id="IPR009027">
    <property type="entry name" value="Ribosomal_bL9/RNase_H1_N"/>
</dbReference>
<dbReference type="InterPro" id="IPR020594">
    <property type="entry name" value="Ribosomal_bL9_bac/chp"/>
</dbReference>
<dbReference type="InterPro" id="IPR020069">
    <property type="entry name" value="Ribosomal_bL9_C"/>
</dbReference>
<dbReference type="InterPro" id="IPR036791">
    <property type="entry name" value="Ribosomal_bL9_C_sf"/>
</dbReference>
<dbReference type="InterPro" id="IPR020070">
    <property type="entry name" value="Ribosomal_bL9_N"/>
</dbReference>
<dbReference type="InterPro" id="IPR036935">
    <property type="entry name" value="Ribosomal_bL9_N_sf"/>
</dbReference>
<dbReference type="NCBIfam" id="TIGR00158">
    <property type="entry name" value="L9"/>
    <property type="match status" value="1"/>
</dbReference>
<dbReference type="PANTHER" id="PTHR21368">
    <property type="entry name" value="50S RIBOSOMAL PROTEIN L9"/>
    <property type="match status" value="1"/>
</dbReference>
<dbReference type="Pfam" id="PF03948">
    <property type="entry name" value="Ribosomal_L9_C"/>
    <property type="match status" value="1"/>
</dbReference>
<dbReference type="Pfam" id="PF01281">
    <property type="entry name" value="Ribosomal_L9_N"/>
    <property type="match status" value="1"/>
</dbReference>
<dbReference type="SUPFAM" id="SSF55658">
    <property type="entry name" value="L9 N-domain-like"/>
    <property type="match status" value="1"/>
</dbReference>
<dbReference type="SUPFAM" id="SSF55653">
    <property type="entry name" value="Ribosomal protein L9 C-domain"/>
    <property type="match status" value="1"/>
</dbReference>
<dbReference type="PROSITE" id="PS00651">
    <property type="entry name" value="RIBOSOMAL_L9"/>
    <property type="match status" value="1"/>
</dbReference>
<sequence>MKVILIKDCKDGKANTIIEVSDGYGSNFLINKGFALPYNEKTKKQLEKRLSDLTANEMEMRQSALELKEKLEKESLKYELEANIDANSNLNVHGAVSTKDIVKSLVKLGYKLDKYAVQKVHLVGRGVHLIDVIVYKDIVAKLKVDIIINVK</sequence>
<protein>
    <recommendedName>
        <fullName evidence="1">Large ribosomal subunit protein bL9</fullName>
    </recommendedName>
    <alternativeName>
        <fullName evidence="2">50S ribosomal protein L9</fullName>
    </alternativeName>
</protein>
<feature type="chain" id="PRO_1000126942" description="Large ribosomal subunit protein bL9">
    <location>
        <begin position="1"/>
        <end position="151"/>
    </location>
</feature>
<evidence type="ECO:0000255" key="1">
    <source>
        <dbReference type="HAMAP-Rule" id="MF_00503"/>
    </source>
</evidence>
<evidence type="ECO:0000305" key="2"/>
<proteinExistence type="inferred from homology"/>
<organism>
    <name type="scientific">Mycoplasmopsis agalactiae (strain NCTC 10123 / CIP 59.7 / PG2)</name>
    <name type="common">Mycoplasma agalactiae</name>
    <dbReference type="NCBI Taxonomy" id="347257"/>
    <lineage>
        <taxon>Bacteria</taxon>
        <taxon>Bacillati</taxon>
        <taxon>Mycoplasmatota</taxon>
        <taxon>Mycoplasmoidales</taxon>
        <taxon>Metamycoplasmataceae</taxon>
        <taxon>Mycoplasmopsis</taxon>
    </lineage>
</organism>
<reference key="1">
    <citation type="journal article" date="2007" name="PLoS Genet.">
        <title>Being pathogenic, plastic, and sexual while living with a nearly minimal bacterial genome.</title>
        <authorList>
            <person name="Sirand-Pugnet P."/>
            <person name="Lartigue C."/>
            <person name="Marenda M."/>
            <person name="Jacob D."/>
            <person name="Barre A."/>
            <person name="Barbe V."/>
            <person name="Schenowitz C."/>
            <person name="Mangenot S."/>
            <person name="Couloux A."/>
            <person name="Segurens B."/>
            <person name="de Daruvar A."/>
            <person name="Blanchard A."/>
            <person name="Citti C."/>
        </authorList>
    </citation>
    <scope>NUCLEOTIDE SEQUENCE [LARGE SCALE GENOMIC DNA]</scope>
    <source>
        <strain>NCTC 10123 / CIP 59.7 / PG2</strain>
    </source>
</reference>
<comment type="function">
    <text evidence="1">Binds to the 23S rRNA.</text>
</comment>
<comment type="similarity">
    <text evidence="1">Belongs to the bacterial ribosomal protein bL9 family.</text>
</comment>
<keyword id="KW-1185">Reference proteome</keyword>
<keyword id="KW-0687">Ribonucleoprotein</keyword>
<keyword id="KW-0689">Ribosomal protein</keyword>
<keyword id="KW-0694">RNA-binding</keyword>
<keyword id="KW-0699">rRNA-binding</keyword>